<keyword id="KW-0285">Flavoprotein</keyword>
<keyword id="KW-0288">FMN</keyword>
<keyword id="KW-0560">Oxidoreductase</keyword>
<proteinExistence type="inferred from homology"/>
<sequence length="432" mass="47337">MNFDVAIIGGGLAGLTCGIALQQRGKRCVIINNGQAAIDFASGSLDLLSRMPSTTYGENRAVENLKENITALRNELPAHPYSLLGAEKVLAKAQDFERLANELHLDLIGSTEKNHWRVTGLGSLRGAWLSPNSVPTVQGNELFPHKRIAVLGIEGYHDFQPQLLAANLVLNPQFEYCEVTSGFLNIPQLDELRKNAREFRSVNISQLLEHKLAFKDLVKEIIESSQGAEAVFLPACFGLENQEFMTALRDATKLALFELPTLPPSLLGMRQRIQLRHKFESLGGLMINGDSALNATFEGNKVRCINTRLLEDEEITADNFVLASGSFFSKGLISEFDKIYEPVFESDIIGVEGFNQKDRFTWTVHRFAHPQPYQSAGVAINAQCQVKKCGQFLTNLYAVGNVIGGFNALELGCGSGVAVVTALAVADEILAK</sequence>
<protein>
    <recommendedName>
        <fullName evidence="1">Anaerobic glycerol-3-phosphate dehydrogenase subunit B</fullName>
        <shortName evidence="1">Anaerobic G-3-P dehydrogenase subunit B</shortName>
        <shortName evidence="1">Anaerobic G3Pdhase B</shortName>
        <ecNumber evidence="1">1.1.5.3</ecNumber>
    </recommendedName>
</protein>
<gene>
    <name evidence="1" type="primary">glpB</name>
    <name type="ordered locus">CGSHiEE_08760</name>
</gene>
<reference key="1">
    <citation type="journal article" date="2007" name="Genome Biol.">
        <title>Characterization and modeling of the Haemophilus influenzae core and supragenomes based on the complete genomic sequences of Rd and 12 clinical nontypeable strains.</title>
        <authorList>
            <person name="Hogg J.S."/>
            <person name="Hu F.Z."/>
            <person name="Janto B."/>
            <person name="Boissy R."/>
            <person name="Hayes J."/>
            <person name="Keefe R."/>
            <person name="Post J.C."/>
            <person name="Ehrlich G.D."/>
        </authorList>
    </citation>
    <scope>NUCLEOTIDE SEQUENCE [LARGE SCALE GENOMIC DNA]</scope>
    <source>
        <strain>PittEE</strain>
    </source>
</reference>
<accession>A5UE48</accession>
<comment type="function">
    <text evidence="1">Conversion of glycerol 3-phosphate to dihydroxyacetone. Uses fumarate or nitrate as electron acceptor.</text>
</comment>
<comment type="catalytic activity">
    <reaction evidence="1">
        <text>a quinone + sn-glycerol 3-phosphate = dihydroxyacetone phosphate + a quinol</text>
        <dbReference type="Rhea" id="RHEA:18977"/>
        <dbReference type="ChEBI" id="CHEBI:24646"/>
        <dbReference type="ChEBI" id="CHEBI:57597"/>
        <dbReference type="ChEBI" id="CHEBI:57642"/>
        <dbReference type="ChEBI" id="CHEBI:132124"/>
        <dbReference type="EC" id="1.1.5.3"/>
    </reaction>
</comment>
<comment type="cofactor">
    <cofactor evidence="1">
        <name>FMN</name>
        <dbReference type="ChEBI" id="CHEBI:58210"/>
    </cofactor>
</comment>
<comment type="pathway">
    <text evidence="1">Polyol metabolism; glycerol degradation via glycerol kinase pathway; glycerone phosphate from sn-glycerol 3-phosphate (anaerobic route): step 1/1.</text>
</comment>
<comment type="subunit">
    <text evidence="1">Composed of a catalytic GlpA/B dimer and of membrane bound GlpC.</text>
</comment>
<comment type="similarity">
    <text evidence="1">Belongs to the anaerobic G-3-P dehydrogenase subunit B family.</text>
</comment>
<feature type="chain" id="PRO_1000046604" description="Anaerobic glycerol-3-phosphate dehydrogenase subunit B">
    <location>
        <begin position="1"/>
        <end position="432"/>
    </location>
</feature>
<organism>
    <name type="scientific">Haemophilus influenzae (strain PittEE)</name>
    <dbReference type="NCBI Taxonomy" id="374930"/>
    <lineage>
        <taxon>Bacteria</taxon>
        <taxon>Pseudomonadati</taxon>
        <taxon>Pseudomonadota</taxon>
        <taxon>Gammaproteobacteria</taxon>
        <taxon>Pasteurellales</taxon>
        <taxon>Pasteurellaceae</taxon>
        <taxon>Haemophilus</taxon>
    </lineage>
</organism>
<evidence type="ECO:0000255" key="1">
    <source>
        <dbReference type="HAMAP-Rule" id="MF_00753"/>
    </source>
</evidence>
<dbReference type="EC" id="1.1.5.3" evidence="1"/>
<dbReference type="EMBL" id="CP000671">
    <property type="protein sequence ID" value="ABQ99049.1"/>
    <property type="molecule type" value="Genomic_DNA"/>
</dbReference>
<dbReference type="KEGG" id="hip:CGSHiEE_08760"/>
<dbReference type="HOGENOM" id="CLU_047793_0_0_6"/>
<dbReference type="UniPathway" id="UPA00618">
    <property type="reaction ID" value="UER00673"/>
</dbReference>
<dbReference type="GO" id="GO:0009331">
    <property type="term" value="C:glycerol-3-phosphate dehydrogenase (FAD) complex"/>
    <property type="evidence" value="ECO:0007669"/>
    <property type="project" value="InterPro"/>
</dbReference>
<dbReference type="GO" id="GO:0004368">
    <property type="term" value="F:glycerol-3-phosphate dehydrogenase (quinone) activity"/>
    <property type="evidence" value="ECO:0007669"/>
    <property type="project" value="UniProtKB-UniRule"/>
</dbReference>
<dbReference type="GO" id="GO:0019563">
    <property type="term" value="P:glycerol catabolic process"/>
    <property type="evidence" value="ECO:0007669"/>
    <property type="project" value="UniProtKB-UniRule"/>
</dbReference>
<dbReference type="Gene3D" id="3.50.50.60">
    <property type="entry name" value="FAD/NAD(P)-binding domain"/>
    <property type="match status" value="1"/>
</dbReference>
<dbReference type="HAMAP" id="MF_00753">
    <property type="entry name" value="Glycerol3P_GlpB"/>
    <property type="match status" value="1"/>
</dbReference>
<dbReference type="InterPro" id="IPR003953">
    <property type="entry name" value="FAD-dep_OxRdtase_2_FAD-bd"/>
</dbReference>
<dbReference type="InterPro" id="IPR050315">
    <property type="entry name" value="FAD-oxidoreductase_2"/>
</dbReference>
<dbReference type="InterPro" id="IPR036188">
    <property type="entry name" value="FAD/NAD-bd_sf"/>
</dbReference>
<dbReference type="InterPro" id="IPR009158">
    <property type="entry name" value="G3P_DH_GlpB_su"/>
</dbReference>
<dbReference type="NCBIfam" id="TIGR03378">
    <property type="entry name" value="glycerol3P_GlpB"/>
    <property type="match status" value="1"/>
</dbReference>
<dbReference type="NCBIfam" id="NF003719">
    <property type="entry name" value="PRK05329.1-2"/>
    <property type="match status" value="1"/>
</dbReference>
<dbReference type="NCBIfam" id="NF003720">
    <property type="entry name" value="PRK05329.1-3"/>
    <property type="match status" value="1"/>
</dbReference>
<dbReference type="NCBIfam" id="NF003721">
    <property type="entry name" value="PRK05329.1-4"/>
    <property type="match status" value="1"/>
</dbReference>
<dbReference type="PANTHER" id="PTHR43400:SF11">
    <property type="entry name" value="ANAEROBIC GLYCEROL-3-PHOSPHATE DEHYDROGENASE SUBUNIT B"/>
    <property type="match status" value="1"/>
</dbReference>
<dbReference type="PANTHER" id="PTHR43400">
    <property type="entry name" value="FUMARATE REDUCTASE"/>
    <property type="match status" value="1"/>
</dbReference>
<dbReference type="Pfam" id="PF00890">
    <property type="entry name" value="FAD_binding_2"/>
    <property type="match status" value="1"/>
</dbReference>
<dbReference type="PIRSF" id="PIRSF000141">
    <property type="entry name" value="Anaerobic_G3P_dh"/>
    <property type="match status" value="1"/>
</dbReference>
<dbReference type="SUPFAM" id="SSF51905">
    <property type="entry name" value="FAD/NAD(P)-binding domain"/>
    <property type="match status" value="1"/>
</dbReference>
<name>GLPB_HAEIE</name>